<accession>Q9WYH8</accession>
<sequence>MIVVLKPGSTEEDIRKVVKLAESYNLKCHISKGQERTVIGIIGDDRYVVADKFESLDCVESVVRVLKPYKLVSREFHPEDTVIDLGDVKIGNGYFTIIAGPCSVEGREMLMETAHFLSELGVKVLRGGAYKPRTSPYSFQGLGEKGLEYLREAADKYGMYVVTEALGEDDLPKVAEYADIIQIGARNAQNFRLLSKAGSYNKPVLLKRGFMNTIEEFLLSAEYIANSGNTKIILCERGIRTFEKATRNTLDISAVPIIRKESHLPILVDPSHSGGRRDLVIPLSRAAIAVGAHGIIVEVHPEPEKALSDGKQSLDFELFKELVQEMKKLADALGVKVN</sequence>
<organism>
    <name type="scientific">Thermotoga maritima (strain ATCC 43589 / DSM 3109 / JCM 10099 / NBRC 100826 / MSB8)</name>
    <dbReference type="NCBI Taxonomy" id="243274"/>
    <lineage>
        <taxon>Bacteria</taxon>
        <taxon>Thermotogati</taxon>
        <taxon>Thermotogota</taxon>
        <taxon>Thermotogae</taxon>
        <taxon>Thermotogales</taxon>
        <taxon>Thermotogaceae</taxon>
        <taxon>Thermotoga</taxon>
    </lineage>
</organism>
<name>AROF_THEMA</name>
<comment type="function">
    <text>Catalyzes the condensation of phosphoenolpyruvate (PEP) and D-erythrose-4-phosphate (E4P) giving rise to 3-deoxy-D-arabino-heptulosonate-7-phosphate (DAHP).</text>
</comment>
<comment type="catalytic activity">
    <reaction>
        <text>D-erythrose 4-phosphate + phosphoenolpyruvate + H2O = 7-phospho-2-dehydro-3-deoxy-D-arabino-heptonate + phosphate</text>
        <dbReference type="Rhea" id="RHEA:14717"/>
        <dbReference type="ChEBI" id="CHEBI:15377"/>
        <dbReference type="ChEBI" id="CHEBI:16897"/>
        <dbReference type="ChEBI" id="CHEBI:43474"/>
        <dbReference type="ChEBI" id="CHEBI:58394"/>
        <dbReference type="ChEBI" id="CHEBI:58702"/>
        <dbReference type="EC" id="2.5.1.54"/>
    </reaction>
</comment>
<comment type="cofactor">
    <cofactor>
        <name>a divalent metal cation</name>
        <dbReference type="ChEBI" id="CHEBI:60240"/>
    </cofactor>
    <text>Divalent metal ions.</text>
</comment>
<comment type="activity regulation">
    <text>Inhibited by L-phenylalanine and L-tyrosine.</text>
</comment>
<comment type="biophysicochemical properties">
    <phDependence>
        <text>Optimum pH is 6.3 at 60 degrees Celsius.</text>
    </phDependence>
    <temperatureDependence>
        <text>Optimum temperature is 90 degrees Celsius. Extremely thermostable.</text>
    </temperatureDependence>
</comment>
<comment type="pathway">
    <text>Metabolic intermediate biosynthesis; chorismate biosynthesis; chorismate from D-erythrose 4-phosphate and phosphoenolpyruvate: step 1/7.</text>
</comment>
<comment type="subunit">
    <text>Homotetramer.</text>
</comment>
<comment type="similarity">
    <text evidence="1">Belongs to the class-I DAHP synthase family.</text>
</comment>
<gene>
    <name type="primary">aroF</name>
    <name type="ordered locus">TM_0343</name>
</gene>
<proteinExistence type="evidence at protein level"/>
<keyword id="KW-0002">3D-structure</keyword>
<keyword id="KW-0028">Amino-acid biosynthesis</keyword>
<keyword id="KW-0057">Aromatic amino acid biosynthesis</keyword>
<keyword id="KW-1185">Reference proteome</keyword>
<keyword id="KW-0808">Transferase</keyword>
<reference key="1">
    <citation type="journal article" date="1999" name="Nature">
        <title>Evidence for lateral gene transfer between Archaea and Bacteria from genome sequence of Thermotoga maritima.</title>
        <authorList>
            <person name="Nelson K.E."/>
            <person name="Clayton R.A."/>
            <person name="Gill S.R."/>
            <person name="Gwinn M.L."/>
            <person name="Dodson R.J."/>
            <person name="Haft D.H."/>
            <person name="Hickey E.K."/>
            <person name="Peterson J.D."/>
            <person name="Nelson W.C."/>
            <person name="Ketchum K.A."/>
            <person name="McDonald L.A."/>
            <person name="Utterback T.R."/>
            <person name="Malek J.A."/>
            <person name="Linher K.D."/>
            <person name="Garrett M.M."/>
            <person name="Stewart A.M."/>
            <person name="Cotton M.D."/>
            <person name="Pratt M.S."/>
            <person name="Phillips C.A."/>
            <person name="Richardson D.L."/>
            <person name="Heidelberg J.F."/>
            <person name="Sutton G.G."/>
            <person name="Fleischmann R.D."/>
            <person name="Eisen J.A."/>
            <person name="White O."/>
            <person name="Salzberg S.L."/>
            <person name="Smith H.O."/>
            <person name="Venter J.C."/>
            <person name="Fraser C.M."/>
        </authorList>
    </citation>
    <scope>NUCLEOTIDE SEQUENCE [LARGE SCALE GENOMIC DNA]</scope>
    <source>
        <strain>ATCC 43589 / DSM 3109 / JCM 10099 / NBRC 100826 / MSB8</strain>
    </source>
</reference>
<reference key="2">
    <citation type="journal article" date="2003" name="J. Biol. Chem.">
        <title>Thermotoga maritima 3-deoxy-D-arabino-heptulosonate 7-phosphate (DAHP) synthase: the ancestral eubacterial DAHP synthase?</title>
        <authorList>
            <person name="Wu J."/>
            <person name="Howe D.L."/>
            <person name="Woodard R.W."/>
        </authorList>
    </citation>
    <scope>CHARACTERIZATION</scope>
    <source>
        <strain>ATCC 43589 / DSM 3109 / JCM 10099 / NBRC 100826 / MSB8</strain>
    </source>
</reference>
<protein>
    <recommendedName>
        <fullName>Phospho-2-dehydro-3-deoxyheptonate aldolase</fullName>
        <ecNumber>2.5.1.54</ecNumber>
    </recommendedName>
    <alternativeName>
        <fullName>3-deoxy-D-arabino-heptulosonate 7-phosphate synthase</fullName>
    </alternativeName>
    <alternativeName>
        <fullName>DAHP synthase</fullName>
    </alternativeName>
    <alternativeName>
        <fullName>Phospho-2-keto-3-deoxyheptonate aldolase</fullName>
    </alternativeName>
</protein>
<evidence type="ECO:0000305" key="1"/>
<evidence type="ECO:0007829" key="2">
    <source>
        <dbReference type="PDB" id="1RZM"/>
    </source>
</evidence>
<evidence type="ECO:0007829" key="3">
    <source>
        <dbReference type="PDB" id="1VR6"/>
    </source>
</evidence>
<evidence type="ECO:0007829" key="4">
    <source>
        <dbReference type="PDB" id="3PG8"/>
    </source>
</evidence>
<dbReference type="EC" id="2.5.1.54"/>
<dbReference type="EMBL" id="AE000512">
    <property type="protein sequence ID" value="AAD35429.1"/>
    <property type="molecule type" value="Genomic_DNA"/>
</dbReference>
<dbReference type="PIR" id="E72388">
    <property type="entry name" value="E72388"/>
</dbReference>
<dbReference type="RefSeq" id="NP_228154.1">
    <property type="nucleotide sequence ID" value="NC_000853.1"/>
</dbReference>
<dbReference type="RefSeq" id="WP_004083125.1">
    <property type="nucleotide sequence ID" value="NZ_CP011107.1"/>
</dbReference>
<dbReference type="PDB" id="1RZM">
    <property type="method" value="X-ray"/>
    <property type="resolution" value="2.20 A"/>
    <property type="chains" value="A/B=1-338"/>
</dbReference>
<dbReference type="PDB" id="1VR6">
    <property type="method" value="X-ray"/>
    <property type="resolution" value="1.92 A"/>
    <property type="chains" value="A/B/C/D=1-338"/>
</dbReference>
<dbReference type="PDB" id="3PG8">
    <property type="method" value="X-ray"/>
    <property type="resolution" value="2.00 A"/>
    <property type="chains" value="A/B=71-338"/>
</dbReference>
<dbReference type="PDB" id="3PG9">
    <property type="method" value="X-ray"/>
    <property type="resolution" value="2.35 A"/>
    <property type="chains" value="A/B/C/D/E/F/G/H=1-338"/>
</dbReference>
<dbReference type="PDB" id="4GRS">
    <property type="method" value="X-ray"/>
    <property type="resolution" value="3.00 A"/>
    <property type="chains" value="A/B/C/D=1-103"/>
</dbReference>
<dbReference type="PDBsum" id="1RZM"/>
<dbReference type="PDBsum" id="1VR6"/>
<dbReference type="PDBsum" id="3PG8"/>
<dbReference type="PDBsum" id="3PG9"/>
<dbReference type="PDBsum" id="4GRS"/>
<dbReference type="SMR" id="Q9WYH8"/>
<dbReference type="FunCoup" id="Q9WYH8">
    <property type="interactions" value="296"/>
</dbReference>
<dbReference type="STRING" id="243274.TM_0343"/>
<dbReference type="DrugBank" id="DB03937">
    <property type="generic name" value="D-erythrose 4-phosphate"/>
</dbReference>
<dbReference type="DrugBank" id="DB01819">
    <property type="generic name" value="Phosphoenolpyruvate"/>
</dbReference>
<dbReference type="PaxDb" id="243274-THEMA_03000"/>
<dbReference type="EnsemblBacteria" id="AAD35429">
    <property type="protein sequence ID" value="AAD35429"/>
    <property type="gene ID" value="TM_0343"/>
</dbReference>
<dbReference type="KEGG" id="tma:TM0343"/>
<dbReference type="KEGG" id="tmi:THEMA_03000"/>
<dbReference type="KEGG" id="tmm:Tmari_0341"/>
<dbReference type="KEGG" id="tmw:THMA_0351"/>
<dbReference type="eggNOG" id="COG2876">
    <property type="taxonomic scope" value="Bacteria"/>
</dbReference>
<dbReference type="InParanoid" id="Q9WYH8"/>
<dbReference type="OrthoDB" id="9780456at2"/>
<dbReference type="BRENDA" id="2.5.1.54">
    <property type="organism ID" value="6331"/>
</dbReference>
<dbReference type="UniPathway" id="UPA00053">
    <property type="reaction ID" value="UER00084"/>
</dbReference>
<dbReference type="EvolutionaryTrace" id="Q9WYH8"/>
<dbReference type="Proteomes" id="UP000008183">
    <property type="component" value="Chromosome"/>
</dbReference>
<dbReference type="GO" id="GO:0003849">
    <property type="term" value="F:3-deoxy-7-phosphoheptulonate synthase activity"/>
    <property type="evidence" value="ECO:0007669"/>
    <property type="project" value="UniProtKB-EC"/>
</dbReference>
<dbReference type="GO" id="GO:0016832">
    <property type="term" value="F:aldehyde-lyase activity"/>
    <property type="evidence" value="ECO:0007669"/>
    <property type="project" value="InterPro"/>
</dbReference>
<dbReference type="GO" id="GO:0008652">
    <property type="term" value="P:amino acid biosynthetic process"/>
    <property type="evidence" value="ECO:0007669"/>
    <property type="project" value="UniProtKB-KW"/>
</dbReference>
<dbReference type="GO" id="GO:0009073">
    <property type="term" value="P:aromatic amino acid family biosynthetic process"/>
    <property type="evidence" value="ECO:0007669"/>
    <property type="project" value="UniProtKB-KW"/>
</dbReference>
<dbReference type="GO" id="GO:0009423">
    <property type="term" value="P:chorismate biosynthetic process"/>
    <property type="evidence" value="ECO:0007669"/>
    <property type="project" value="UniProtKB-UniPathway"/>
</dbReference>
<dbReference type="Gene3D" id="3.20.20.70">
    <property type="entry name" value="Aldolase class I"/>
    <property type="match status" value="1"/>
</dbReference>
<dbReference type="Gene3D" id="3.30.70.1140">
    <property type="entry name" value="Phospho-2-dehydro-3-deoxyheptonate aldolase, domain 1"/>
    <property type="match status" value="1"/>
</dbReference>
<dbReference type="InterPro" id="IPR013785">
    <property type="entry name" value="Aldolase_TIM"/>
</dbReference>
<dbReference type="InterPro" id="IPR052899">
    <property type="entry name" value="Class-I_DAHP_synthase"/>
</dbReference>
<dbReference type="InterPro" id="IPR006218">
    <property type="entry name" value="DAHP1/KDSA"/>
</dbReference>
<dbReference type="InterPro" id="IPR041071">
    <property type="entry name" value="DAHP_snth_FXD"/>
</dbReference>
<dbReference type="InterPro" id="IPR006268">
    <property type="entry name" value="DAHP_syn_2"/>
</dbReference>
<dbReference type="NCBIfam" id="TIGR01361">
    <property type="entry name" value="DAHP_synth_Bsub"/>
    <property type="match status" value="1"/>
</dbReference>
<dbReference type="NCBIfam" id="NF006421">
    <property type="entry name" value="PRK08673.1"/>
    <property type="match status" value="1"/>
</dbReference>
<dbReference type="NCBIfam" id="NF009239">
    <property type="entry name" value="PRK12595.1"/>
    <property type="match status" value="1"/>
</dbReference>
<dbReference type="PANTHER" id="PTHR43018">
    <property type="entry name" value="PHOSPHO-2-DEHYDRO-3-DEOXYHEPTONATE ALDOLASE"/>
    <property type="match status" value="1"/>
</dbReference>
<dbReference type="PANTHER" id="PTHR43018:SF2">
    <property type="entry name" value="PHOSPHO-2-DEHYDRO-3-DEOXYHEPTONATE ALDOLASE"/>
    <property type="match status" value="1"/>
</dbReference>
<dbReference type="Pfam" id="PF18152">
    <property type="entry name" value="DAHP_snth_FXD"/>
    <property type="match status" value="1"/>
</dbReference>
<dbReference type="Pfam" id="PF00793">
    <property type="entry name" value="DAHP_synth_1"/>
    <property type="match status" value="1"/>
</dbReference>
<dbReference type="SUPFAM" id="SSF51569">
    <property type="entry name" value="Aldolase"/>
    <property type="match status" value="1"/>
</dbReference>
<feature type="chain" id="PRO_0000140847" description="Phospho-2-dehydro-3-deoxyheptonate aldolase">
    <location>
        <begin position="1"/>
        <end position="338"/>
    </location>
</feature>
<feature type="strand" evidence="3">
    <location>
        <begin position="1"/>
        <end position="5"/>
    </location>
</feature>
<feature type="helix" evidence="3">
    <location>
        <begin position="11"/>
        <end position="23"/>
    </location>
</feature>
<feature type="strand" evidence="3">
    <location>
        <begin position="26"/>
        <end position="32"/>
    </location>
</feature>
<feature type="strand" evidence="3">
    <location>
        <begin position="37"/>
        <end position="47"/>
    </location>
</feature>
<feature type="helix" evidence="3">
    <location>
        <begin position="50"/>
        <end position="54"/>
    </location>
</feature>
<feature type="strand" evidence="3">
    <location>
        <begin position="59"/>
        <end position="64"/>
    </location>
</feature>
<feature type="turn" evidence="3">
    <location>
        <begin position="74"/>
        <end position="76"/>
    </location>
</feature>
<feature type="strand" evidence="4">
    <location>
        <begin position="82"/>
        <end position="84"/>
    </location>
</feature>
<feature type="strand" evidence="3">
    <location>
        <begin position="89"/>
        <end position="91"/>
    </location>
</feature>
<feature type="strand" evidence="3">
    <location>
        <begin position="94"/>
        <end position="100"/>
    </location>
</feature>
<feature type="helix" evidence="3">
    <location>
        <begin position="107"/>
        <end position="119"/>
    </location>
</feature>
<feature type="strand" evidence="3">
    <location>
        <begin position="124"/>
        <end position="126"/>
    </location>
</feature>
<feature type="strand" evidence="2">
    <location>
        <begin position="128"/>
        <end position="130"/>
    </location>
</feature>
<feature type="helix" evidence="3">
    <location>
        <begin position="144"/>
        <end position="157"/>
    </location>
</feature>
<feature type="strand" evidence="3">
    <location>
        <begin position="160"/>
        <end position="164"/>
    </location>
</feature>
<feature type="helix" evidence="3">
    <location>
        <begin position="168"/>
        <end position="170"/>
    </location>
</feature>
<feature type="helix" evidence="3">
    <location>
        <begin position="171"/>
        <end position="177"/>
    </location>
</feature>
<feature type="strand" evidence="3">
    <location>
        <begin position="179"/>
        <end position="183"/>
    </location>
</feature>
<feature type="helix" evidence="3">
    <location>
        <begin position="185"/>
        <end position="187"/>
    </location>
</feature>
<feature type="helix" evidence="3">
    <location>
        <begin position="191"/>
        <end position="198"/>
    </location>
</feature>
<feature type="strand" evidence="3">
    <location>
        <begin position="204"/>
        <end position="207"/>
    </location>
</feature>
<feature type="helix" evidence="3">
    <location>
        <begin position="214"/>
        <end position="226"/>
    </location>
</feature>
<feature type="strand" evidence="3">
    <location>
        <begin position="232"/>
        <end position="236"/>
    </location>
</feature>
<feature type="strand" evidence="3">
    <location>
        <begin position="245"/>
        <end position="249"/>
    </location>
</feature>
<feature type="helix" evidence="3">
    <location>
        <begin position="254"/>
        <end position="261"/>
    </location>
</feature>
<feature type="strand" evidence="3">
    <location>
        <begin position="262"/>
        <end position="264"/>
    </location>
</feature>
<feature type="strand" evidence="3">
    <location>
        <begin position="266"/>
        <end position="268"/>
    </location>
</feature>
<feature type="helix" evidence="3">
    <location>
        <begin position="270"/>
        <end position="274"/>
    </location>
</feature>
<feature type="helix" evidence="3">
    <location>
        <begin position="277"/>
        <end position="279"/>
    </location>
</feature>
<feature type="helix" evidence="3">
    <location>
        <begin position="280"/>
        <end position="290"/>
    </location>
</feature>
<feature type="strand" evidence="3">
    <location>
        <begin position="293"/>
        <end position="299"/>
    </location>
</feature>
<feature type="helix" evidence="3">
    <location>
        <begin position="303"/>
        <end position="305"/>
    </location>
</feature>
<feature type="helix" evidence="3">
    <location>
        <begin position="310"/>
        <end position="312"/>
    </location>
</feature>
<feature type="helix" evidence="3">
    <location>
        <begin position="316"/>
        <end position="333"/>
    </location>
</feature>
<feature type="strand" evidence="3">
    <location>
        <begin position="336"/>
        <end position="338"/>
    </location>
</feature>